<keyword id="KW-0010">Activator</keyword>
<keyword id="KW-0963">Cytoplasm</keyword>
<keyword id="KW-0238">DNA-binding</keyword>
<keyword id="KW-0346">Stress response</keyword>
<keyword id="KW-0804">Transcription</keyword>
<keyword id="KW-0805">Transcription regulation</keyword>
<evidence type="ECO:0000250" key="1"/>
<protein>
    <recommendedName>
        <fullName>Major cold-shock protein</fullName>
    </recommendedName>
</protein>
<name>CSPA_AERSA</name>
<sequence length="46" mass="5095">EKGFGFISPADGSKDVFVHFSAIQSTSFKTLDEGQRVEFTIEQGQK</sequence>
<accession>Q44317</accession>
<feature type="chain" id="PRO_0000100277" description="Major cold-shock protein">
    <location>
        <begin position="1" status="less than"/>
        <end position="46" status="greater than"/>
    </location>
</feature>
<feature type="domain" description="CSD">
    <location>
        <begin position="1" status="less than"/>
        <end position="46" status="greater than"/>
    </location>
</feature>
<feature type="non-terminal residue">
    <location>
        <position position="1"/>
    </location>
</feature>
<feature type="non-terminal residue">
    <location>
        <position position="46"/>
    </location>
</feature>
<comment type="subunit">
    <text evidence="1">Homodimer.</text>
</comment>
<comment type="subcellular location">
    <subcellularLocation>
        <location evidence="1">Cytoplasm</location>
    </subcellularLocation>
</comment>
<comment type="induction">
    <text evidence="1">In response to low temperature.</text>
</comment>
<organism>
    <name type="scientific">Aeromonas salmonicida</name>
    <dbReference type="NCBI Taxonomy" id="645"/>
    <lineage>
        <taxon>Bacteria</taxon>
        <taxon>Pseudomonadati</taxon>
        <taxon>Pseudomonadota</taxon>
        <taxon>Gammaproteobacteria</taxon>
        <taxon>Aeromonadales</taxon>
        <taxon>Aeromonadaceae</taxon>
        <taxon>Aeromonas</taxon>
    </lineage>
</organism>
<proteinExistence type="inferred from homology"/>
<dbReference type="EMBL" id="U60027">
    <property type="protein sequence ID" value="AAC80231.1"/>
    <property type="molecule type" value="Genomic_DNA"/>
</dbReference>
<dbReference type="SMR" id="Q44317"/>
<dbReference type="STRING" id="1233098.GCA_000315855_02377"/>
<dbReference type="GO" id="GO:0005829">
    <property type="term" value="C:cytosol"/>
    <property type="evidence" value="ECO:0007669"/>
    <property type="project" value="UniProtKB-ARBA"/>
</dbReference>
<dbReference type="GO" id="GO:0003677">
    <property type="term" value="F:DNA binding"/>
    <property type="evidence" value="ECO:0007669"/>
    <property type="project" value="UniProtKB-KW"/>
</dbReference>
<dbReference type="CDD" id="cd04458">
    <property type="entry name" value="CSP_CDS"/>
    <property type="match status" value="1"/>
</dbReference>
<dbReference type="Gene3D" id="2.40.50.140">
    <property type="entry name" value="Nucleic acid-binding proteins"/>
    <property type="match status" value="1"/>
</dbReference>
<dbReference type="InterPro" id="IPR012156">
    <property type="entry name" value="Cold_shock_CspA"/>
</dbReference>
<dbReference type="InterPro" id="IPR011129">
    <property type="entry name" value="CSD"/>
</dbReference>
<dbReference type="InterPro" id="IPR019844">
    <property type="entry name" value="CSD_CS"/>
</dbReference>
<dbReference type="InterPro" id="IPR002059">
    <property type="entry name" value="CSP_DNA-bd"/>
</dbReference>
<dbReference type="InterPro" id="IPR012340">
    <property type="entry name" value="NA-bd_OB-fold"/>
</dbReference>
<dbReference type="PANTHER" id="PTHR46565">
    <property type="entry name" value="COLD SHOCK DOMAIN PROTEIN 2"/>
    <property type="match status" value="1"/>
</dbReference>
<dbReference type="PANTHER" id="PTHR46565:SF20">
    <property type="entry name" value="COLD SHOCK DOMAIN-CONTAINING PROTEIN 4"/>
    <property type="match status" value="1"/>
</dbReference>
<dbReference type="Pfam" id="PF00313">
    <property type="entry name" value="CSD"/>
    <property type="match status" value="1"/>
</dbReference>
<dbReference type="PIRSF" id="PIRSF002599">
    <property type="entry name" value="Cold_shock_A"/>
    <property type="match status" value="1"/>
</dbReference>
<dbReference type="PRINTS" id="PR00050">
    <property type="entry name" value="COLDSHOCK"/>
</dbReference>
<dbReference type="SMART" id="SM00357">
    <property type="entry name" value="CSP"/>
    <property type="match status" value="1"/>
</dbReference>
<dbReference type="SUPFAM" id="SSF50249">
    <property type="entry name" value="Nucleic acid-binding proteins"/>
    <property type="match status" value="1"/>
</dbReference>
<dbReference type="PROSITE" id="PS00352">
    <property type="entry name" value="CSD_1"/>
    <property type="match status" value="1"/>
</dbReference>
<dbReference type="PROSITE" id="PS51857">
    <property type="entry name" value="CSD_2"/>
    <property type="match status" value="1"/>
</dbReference>
<gene>
    <name type="primary">cspA</name>
</gene>
<reference key="1">
    <citation type="journal article" date="1997" name="J. Ind. Microbiol. Biotechnol.">
        <title>Detection and speciation of bacteria through PCR using universal major cold-shock protein primer oligomers.</title>
        <authorList>
            <person name="Francis K.P."/>
            <person name="Stewart G.S.A.B."/>
        </authorList>
    </citation>
    <scope>NUCLEOTIDE SEQUENCE [GENOMIC DNA]</scope>
    <source>
        <strain>ATCC 33658 / DSM 19634 / JCM 7874 / NCIMB 1102 / NCTC 12959</strain>
    </source>
</reference>